<comment type="function">
    <text evidence="1">Required for spatial organization of the terminus region of the chromosome (Ter macrodomain) during the cell cycle. Prevents early segregation of duplicated Ter macrodomains during cell division. Binds specifically to matS, which is a 13 bp signature motif repeated within the Ter macrodomain.</text>
</comment>
<comment type="subunit">
    <text evidence="1">Homodimer.</text>
</comment>
<comment type="subcellular location">
    <subcellularLocation>
        <location evidence="1">Cytoplasm</location>
    </subcellularLocation>
</comment>
<comment type="similarity">
    <text evidence="1">Belongs to the MatP family.</text>
</comment>
<reference key="1">
    <citation type="journal article" date="2011" name="Proc. Natl. Acad. Sci. U.S.A.">
        <title>Genomic anatomy of Escherichia coli O157:H7 outbreaks.</title>
        <authorList>
            <person name="Eppinger M."/>
            <person name="Mammel M.K."/>
            <person name="Leclerc J.E."/>
            <person name="Ravel J."/>
            <person name="Cebula T.A."/>
        </authorList>
    </citation>
    <scope>NUCLEOTIDE SEQUENCE [LARGE SCALE GENOMIC DNA]</scope>
    <source>
        <strain>EC4115 / EHEC</strain>
    </source>
</reference>
<organism>
    <name type="scientific">Escherichia coli O157:H7 (strain EC4115 / EHEC)</name>
    <dbReference type="NCBI Taxonomy" id="444450"/>
    <lineage>
        <taxon>Bacteria</taxon>
        <taxon>Pseudomonadati</taxon>
        <taxon>Pseudomonadota</taxon>
        <taxon>Gammaproteobacteria</taxon>
        <taxon>Enterobacterales</taxon>
        <taxon>Enterobacteriaceae</taxon>
        <taxon>Escherichia</taxon>
    </lineage>
</organism>
<evidence type="ECO:0000255" key="1">
    <source>
        <dbReference type="HAMAP-Rule" id="MF_01073"/>
    </source>
</evidence>
<dbReference type="EMBL" id="CP001164">
    <property type="protein sequence ID" value="ACI36968.1"/>
    <property type="molecule type" value="Genomic_DNA"/>
</dbReference>
<dbReference type="RefSeq" id="WP_000877161.1">
    <property type="nucleotide sequence ID" value="NC_011353.1"/>
</dbReference>
<dbReference type="SMR" id="B5YT86"/>
<dbReference type="GeneID" id="93776458"/>
<dbReference type="KEGG" id="ecf:ECH74115_1120"/>
<dbReference type="HOGENOM" id="CLU_142157_0_0_6"/>
<dbReference type="GO" id="GO:0005737">
    <property type="term" value="C:cytoplasm"/>
    <property type="evidence" value="ECO:0007669"/>
    <property type="project" value="UniProtKB-SubCell"/>
</dbReference>
<dbReference type="GO" id="GO:0043565">
    <property type="term" value="F:sequence-specific DNA binding"/>
    <property type="evidence" value="ECO:0007669"/>
    <property type="project" value="UniProtKB-UniRule"/>
</dbReference>
<dbReference type="GO" id="GO:0051301">
    <property type="term" value="P:cell division"/>
    <property type="evidence" value="ECO:0007669"/>
    <property type="project" value="UniProtKB-UniRule"/>
</dbReference>
<dbReference type="GO" id="GO:0006355">
    <property type="term" value="P:regulation of DNA-templated transcription"/>
    <property type="evidence" value="ECO:0007669"/>
    <property type="project" value="InterPro"/>
</dbReference>
<dbReference type="FunFam" id="1.10.1220.10:FF:000004">
    <property type="entry name" value="Macrodomain Ter protein"/>
    <property type="match status" value="1"/>
</dbReference>
<dbReference type="FunFam" id="1.20.1270.380:FF:000001">
    <property type="entry name" value="Macrodomain Ter protein"/>
    <property type="match status" value="1"/>
</dbReference>
<dbReference type="Gene3D" id="1.20.1270.380">
    <property type="entry name" value="MatP, N-terminal domain"/>
    <property type="match status" value="1"/>
</dbReference>
<dbReference type="Gene3D" id="1.10.1220.10">
    <property type="entry name" value="Met repressor-like"/>
    <property type="match status" value="1"/>
</dbReference>
<dbReference type="HAMAP" id="MF_01073">
    <property type="entry name" value="MatP"/>
    <property type="match status" value="1"/>
</dbReference>
<dbReference type="InterPro" id="IPR013321">
    <property type="entry name" value="Arc_rbn_hlx_hlx"/>
</dbReference>
<dbReference type="InterPro" id="IPR009390">
    <property type="entry name" value="MatP"/>
</dbReference>
<dbReference type="InterPro" id="IPR035375">
    <property type="entry name" value="MatP_C"/>
</dbReference>
<dbReference type="InterPro" id="IPR035087">
    <property type="entry name" value="MatP_N"/>
</dbReference>
<dbReference type="InterPro" id="IPR038339">
    <property type="entry name" value="MatP_N_sf"/>
</dbReference>
<dbReference type="NCBIfam" id="NF003471">
    <property type="entry name" value="PRK05097.1"/>
    <property type="match status" value="1"/>
</dbReference>
<dbReference type="Pfam" id="PF06303">
    <property type="entry name" value="MatP"/>
    <property type="match status" value="1"/>
</dbReference>
<dbReference type="Pfam" id="PF17414">
    <property type="entry name" value="MatP_C"/>
    <property type="match status" value="1"/>
</dbReference>
<protein>
    <recommendedName>
        <fullName evidence="1">Macrodomain Ter protein</fullName>
    </recommendedName>
</protein>
<sequence>MKYQQLENLESGWKWKYLVKKHREGELITRYIEASAAQEAVDVLLSLENEPVLVNGWIDKHMNPELVNRMKQTIRARRKRHFNAEHQHTRKKSIDLEFIVWQRLAGLAQRRGKTLSETIVQLIEDAENKEKYANKMSSLKQDLQALLGKE</sequence>
<keyword id="KW-0131">Cell cycle</keyword>
<keyword id="KW-0132">Cell division</keyword>
<keyword id="KW-0963">Cytoplasm</keyword>
<keyword id="KW-0238">DNA-binding</keyword>
<gene>
    <name evidence="1" type="primary">matP</name>
    <name type="ordered locus">ECH74115_1120</name>
</gene>
<feature type="chain" id="PRO_1000136663" description="Macrodomain Ter protein">
    <location>
        <begin position="1"/>
        <end position="150"/>
    </location>
</feature>
<proteinExistence type="inferred from homology"/>
<accession>B5YT86</accession>
<name>MATP_ECO5E</name>